<proteinExistence type="evidence at transcript level"/>
<comment type="similarity">
    <text evidence="2">Belongs to the eukaryotic ribosomal protein eS19 family.</text>
</comment>
<protein>
    <recommendedName>
        <fullName evidence="1">Small ribosomal subunit protein eS19x</fullName>
    </recommendedName>
    <alternativeName>
        <fullName>40S ribosomal protein S19-3</fullName>
    </alternativeName>
</protein>
<gene>
    <name type="primary">RPS19C</name>
    <name type="ordered locus">At5g61170</name>
    <name type="ORF">MAF19.17</name>
</gene>
<dbReference type="EMBL" id="AB006696">
    <property type="protein sequence ID" value="BAB10379.1"/>
    <property type="molecule type" value="Genomic_DNA"/>
</dbReference>
<dbReference type="EMBL" id="CP002688">
    <property type="protein sequence ID" value="AED97430.1"/>
    <property type="molecule type" value="Genomic_DNA"/>
</dbReference>
<dbReference type="EMBL" id="BT010524">
    <property type="protein sequence ID" value="AAQ65147.1"/>
    <property type="molecule type" value="mRNA"/>
</dbReference>
<dbReference type="RefSeq" id="NP_200925.1">
    <property type="nucleotide sequence ID" value="NM_125510.5"/>
</dbReference>
<dbReference type="SMR" id="Q9FNP8"/>
<dbReference type="BioGRID" id="21482">
    <property type="interactions" value="97"/>
</dbReference>
<dbReference type="FunCoup" id="Q9FNP8">
    <property type="interactions" value="2875"/>
</dbReference>
<dbReference type="IntAct" id="Q9FNP8">
    <property type="interactions" value="1"/>
</dbReference>
<dbReference type="STRING" id="3702.Q9FNP8"/>
<dbReference type="iPTMnet" id="Q9FNP8"/>
<dbReference type="PaxDb" id="3702-AT5G61170.1"/>
<dbReference type="ProteomicsDB" id="226716"/>
<dbReference type="EnsemblPlants" id="AT5G61170.1">
    <property type="protein sequence ID" value="AT5G61170.1"/>
    <property type="gene ID" value="AT5G61170"/>
</dbReference>
<dbReference type="GeneID" id="836238"/>
<dbReference type="Gramene" id="AT5G61170.1">
    <property type="protein sequence ID" value="AT5G61170.1"/>
    <property type="gene ID" value="AT5G61170"/>
</dbReference>
<dbReference type="KEGG" id="ath:AT5G61170"/>
<dbReference type="Araport" id="AT5G61170"/>
<dbReference type="TAIR" id="AT5G61170"/>
<dbReference type="eggNOG" id="KOG3411">
    <property type="taxonomic scope" value="Eukaryota"/>
</dbReference>
<dbReference type="HOGENOM" id="CLU_108559_0_0_1"/>
<dbReference type="InParanoid" id="Q9FNP8"/>
<dbReference type="OMA" id="WAPFVKT"/>
<dbReference type="OrthoDB" id="1028077at2759"/>
<dbReference type="PhylomeDB" id="Q9FNP8"/>
<dbReference type="PRO" id="PR:Q9FNP8"/>
<dbReference type="Proteomes" id="UP000006548">
    <property type="component" value="Chromosome 5"/>
</dbReference>
<dbReference type="ExpressionAtlas" id="Q9FNP8">
    <property type="expression patterns" value="baseline and differential"/>
</dbReference>
<dbReference type="GO" id="GO:0022626">
    <property type="term" value="C:cytosolic ribosome"/>
    <property type="evidence" value="ECO:0007005"/>
    <property type="project" value="TAIR"/>
</dbReference>
<dbReference type="GO" id="GO:0022627">
    <property type="term" value="C:cytosolic small ribosomal subunit"/>
    <property type="evidence" value="ECO:0007005"/>
    <property type="project" value="TAIR"/>
</dbReference>
<dbReference type="GO" id="GO:0000325">
    <property type="term" value="C:plant-type vacuole"/>
    <property type="evidence" value="ECO:0007005"/>
    <property type="project" value="TAIR"/>
</dbReference>
<dbReference type="GO" id="GO:0009536">
    <property type="term" value="C:plastid"/>
    <property type="evidence" value="ECO:0007005"/>
    <property type="project" value="TAIR"/>
</dbReference>
<dbReference type="GO" id="GO:0003729">
    <property type="term" value="F:mRNA binding"/>
    <property type="evidence" value="ECO:0000314"/>
    <property type="project" value="TAIR"/>
</dbReference>
<dbReference type="GO" id="GO:0003735">
    <property type="term" value="F:structural constituent of ribosome"/>
    <property type="evidence" value="ECO:0000314"/>
    <property type="project" value="CAFA"/>
</dbReference>
<dbReference type="GO" id="GO:0006412">
    <property type="term" value="P:translation"/>
    <property type="evidence" value="ECO:0007669"/>
    <property type="project" value="InterPro"/>
</dbReference>
<dbReference type="FunFam" id="1.10.10.10:FF:000118">
    <property type="entry name" value="40S ribosomal protein S19"/>
    <property type="match status" value="1"/>
</dbReference>
<dbReference type="Gene3D" id="1.10.10.10">
    <property type="entry name" value="Winged helix-like DNA-binding domain superfamily/Winged helix DNA-binding domain"/>
    <property type="match status" value="1"/>
</dbReference>
<dbReference type="InterPro" id="IPR001266">
    <property type="entry name" value="Ribosomal_eS19"/>
</dbReference>
<dbReference type="InterPro" id="IPR018277">
    <property type="entry name" value="Ribosomal_eS19_CS"/>
</dbReference>
<dbReference type="InterPro" id="IPR036388">
    <property type="entry name" value="WH-like_DNA-bd_sf"/>
</dbReference>
<dbReference type="InterPro" id="IPR036390">
    <property type="entry name" value="WH_DNA-bd_sf"/>
</dbReference>
<dbReference type="PANTHER" id="PTHR11710">
    <property type="entry name" value="40S RIBOSOMAL PROTEIN S19"/>
    <property type="match status" value="1"/>
</dbReference>
<dbReference type="PANTHER" id="PTHR11710:SF24">
    <property type="entry name" value="SMALL RIBOSOMAL SUBUNIT PROTEIN ES19X"/>
    <property type="match status" value="1"/>
</dbReference>
<dbReference type="Pfam" id="PF01090">
    <property type="entry name" value="Ribosomal_S19e"/>
    <property type="match status" value="1"/>
</dbReference>
<dbReference type="SMART" id="SM01413">
    <property type="entry name" value="Ribosomal_S19e"/>
    <property type="match status" value="1"/>
</dbReference>
<dbReference type="SUPFAM" id="SSF46785">
    <property type="entry name" value="Winged helix' DNA-binding domain"/>
    <property type="match status" value="1"/>
</dbReference>
<dbReference type="PROSITE" id="PS00628">
    <property type="entry name" value="RIBOSOMAL_S19E"/>
    <property type="match status" value="1"/>
</dbReference>
<accession>Q9FNP8</accession>
<name>RS193_ARATH</name>
<feature type="chain" id="PRO_0000153830" description="Small ribosomal subunit protein eS19x">
    <location>
        <begin position="1"/>
        <end position="143"/>
    </location>
</feature>
<sequence length="143" mass="15697">MATGKTVKDVSPHEFVKAYAAHLKRSGKIELPLWTDIVKTGKLKELAPYDPDWYYIRAASMARKVYLRGGLGVGAFRRIYGGSKRNGSRPPHFCKSSGGVARHILQQLQTMNIVDLDTKGGRKITSSGQRDLDQVAGRIAAAV</sequence>
<keyword id="KW-1185">Reference proteome</keyword>
<keyword id="KW-0687">Ribonucleoprotein</keyword>
<keyword id="KW-0689">Ribosomal protein</keyword>
<evidence type="ECO:0000303" key="1">
    <source>
    </source>
</evidence>
<evidence type="ECO:0000305" key="2"/>
<organism>
    <name type="scientific">Arabidopsis thaliana</name>
    <name type="common">Mouse-ear cress</name>
    <dbReference type="NCBI Taxonomy" id="3702"/>
    <lineage>
        <taxon>Eukaryota</taxon>
        <taxon>Viridiplantae</taxon>
        <taxon>Streptophyta</taxon>
        <taxon>Embryophyta</taxon>
        <taxon>Tracheophyta</taxon>
        <taxon>Spermatophyta</taxon>
        <taxon>Magnoliopsida</taxon>
        <taxon>eudicotyledons</taxon>
        <taxon>Gunneridae</taxon>
        <taxon>Pentapetalae</taxon>
        <taxon>rosids</taxon>
        <taxon>malvids</taxon>
        <taxon>Brassicales</taxon>
        <taxon>Brassicaceae</taxon>
        <taxon>Camelineae</taxon>
        <taxon>Arabidopsis</taxon>
    </lineage>
</organism>
<reference key="1">
    <citation type="journal article" date="1997" name="DNA Res.">
        <title>Structural analysis of Arabidopsis thaliana chromosome 5. II. Sequence features of the regions of 1,044,062 bp covered by thirteen physically assigned P1 clones.</title>
        <authorList>
            <person name="Kotani H."/>
            <person name="Nakamura Y."/>
            <person name="Sato S."/>
            <person name="Kaneko T."/>
            <person name="Asamizu E."/>
            <person name="Miyajima N."/>
            <person name="Tabata S."/>
        </authorList>
    </citation>
    <scope>NUCLEOTIDE SEQUENCE [LARGE SCALE GENOMIC DNA]</scope>
    <source>
        <strain>cv. Columbia</strain>
    </source>
</reference>
<reference key="2">
    <citation type="journal article" date="2017" name="Plant J.">
        <title>Araport11: a complete reannotation of the Arabidopsis thaliana reference genome.</title>
        <authorList>
            <person name="Cheng C.Y."/>
            <person name="Krishnakumar V."/>
            <person name="Chan A.P."/>
            <person name="Thibaud-Nissen F."/>
            <person name="Schobel S."/>
            <person name="Town C.D."/>
        </authorList>
    </citation>
    <scope>GENOME REANNOTATION</scope>
    <source>
        <strain>cv. Columbia</strain>
    </source>
</reference>
<reference key="3">
    <citation type="journal article" date="2003" name="Science">
        <title>Empirical analysis of transcriptional activity in the Arabidopsis genome.</title>
        <authorList>
            <person name="Yamada K."/>
            <person name="Lim J."/>
            <person name="Dale J.M."/>
            <person name="Chen H."/>
            <person name="Shinn P."/>
            <person name="Palm C.J."/>
            <person name="Southwick A.M."/>
            <person name="Wu H.C."/>
            <person name="Kim C.J."/>
            <person name="Nguyen M."/>
            <person name="Pham P.K."/>
            <person name="Cheuk R.F."/>
            <person name="Karlin-Newmann G."/>
            <person name="Liu S.X."/>
            <person name="Lam B."/>
            <person name="Sakano H."/>
            <person name="Wu T."/>
            <person name="Yu G."/>
            <person name="Miranda M."/>
            <person name="Quach H.L."/>
            <person name="Tripp M."/>
            <person name="Chang C.H."/>
            <person name="Lee J.M."/>
            <person name="Toriumi M.J."/>
            <person name="Chan M.M."/>
            <person name="Tang C.C."/>
            <person name="Onodera C.S."/>
            <person name="Deng J.M."/>
            <person name="Akiyama K."/>
            <person name="Ansari Y."/>
            <person name="Arakawa T."/>
            <person name="Banh J."/>
            <person name="Banno F."/>
            <person name="Bowser L."/>
            <person name="Brooks S.Y."/>
            <person name="Carninci P."/>
            <person name="Chao Q."/>
            <person name="Choy N."/>
            <person name="Enju A."/>
            <person name="Goldsmith A.D."/>
            <person name="Gurjal M."/>
            <person name="Hansen N.F."/>
            <person name="Hayashizaki Y."/>
            <person name="Johnson-Hopson C."/>
            <person name="Hsuan V.W."/>
            <person name="Iida K."/>
            <person name="Karnes M."/>
            <person name="Khan S."/>
            <person name="Koesema E."/>
            <person name="Ishida J."/>
            <person name="Jiang P.X."/>
            <person name="Jones T."/>
            <person name="Kawai J."/>
            <person name="Kamiya A."/>
            <person name="Meyers C."/>
            <person name="Nakajima M."/>
            <person name="Narusaka M."/>
            <person name="Seki M."/>
            <person name="Sakurai T."/>
            <person name="Satou M."/>
            <person name="Tamse R."/>
            <person name="Vaysberg M."/>
            <person name="Wallender E.K."/>
            <person name="Wong C."/>
            <person name="Yamamura Y."/>
            <person name="Yuan S."/>
            <person name="Shinozaki K."/>
            <person name="Davis R.W."/>
            <person name="Theologis A."/>
            <person name="Ecker J.R."/>
        </authorList>
    </citation>
    <scope>NUCLEOTIDE SEQUENCE [LARGE SCALE MRNA]</scope>
    <source>
        <strain>cv. Columbia</strain>
    </source>
</reference>
<reference key="4">
    <citation type="journal article" date="2001" name="Plant Physiol.">
        <title>The organization of cytoplasmic ribosomal protein genes in the Arabidopsis genome.</title>
        <authorList>
            <person name="Barakat A."/>
            <person name="Szick-Miranda K."/>
            <person name="Chang I.-F."/>
            <person name="Guyot R."/>
            <person name="Blanc G."/>
            <person name="Cooke R."/>
            <person name="Delseny M."/>
            <person name="Bailey-Serres J."/>
        </authorList>
    </citation>
    <scope>GENE FAMILY ORGANIZATION</scope>
    <scope>NOMENCLATURE</scope>
</reference>
<reference key="5">
    <citation type="journal article" date="2023" name="Plant Cell">
        <title>An updated nomenclature for plant ribosomal protein genes.</title>
        <authorList>
            <person name="Scarpin M.R."/>
            <person name="Busche M."/>
            <person name="Martinez R.E."/>
            <person name="Harper L.C."/>
            <person name="Reiser L."/>
            <person name="Szakonyi D."/>
            <person name="Merchante C."/>
            <person name="Lan T."/>
            <person name="Xiong W."/>
            <person name="Mo B."/>
            <person name="Tang G."/>
            <person name="Chen X."/>
            <person name="Bailey-Serres J."/>
            <person name="Browning K.S."/>
            <person name="Brunkard J.O."/>
        </authorList>
    </citation>
    <scope>NOMENCLATURE</scope>
</reference>